<gene>
    <name evidence="1" type="primary">rpmH</name>
    <name type="ordered locus">Ping_3608</name>
</gene>
<name>RL34_PSYIN</name>
<dbReference type="EMBL" id="CP000510">
    <property type="protein sequence ID" value="ABM05291.1"/>
    <property type="molecule type" value="Genomic_DNA"/>
</dbReference>
<dbReference type="RefSeq" id="WP_011771839.1">
    <property type="nucleotide sequence ID" value="NC_008709.1"/>
</dbReference>
<dbReference type="SMR" id="A1T0M6"/>
<dbReference type="STRING" id="357804.Ping_3608"/>
<dbReference type="KEGG" id="pin:Ping_3608"/>
<dbReference type="eggNOG" id="COG0230">
    <property type="taxonomic scope" value="Bacteria"/>
</dbReference>
<dbReference type="HOGENOM" id="CLU_129938_2_0_6"/>
<dbReference type="OrthoDB" id="9804164at2"/>
<dbReference type="Proteomes" id="UP000000639">
    <property type="component" value="Chromosome"/>
</dbReference>
<dbReference type="GO" id="GO:1990904">
    <property type="term" value="C:ribonucleoprotein complex"/>
    <property type="evidence" value="ECO:0007669"/>
    <property type="project" value="UniProtKB-KW"/>
</dbReference>
<dbReference type="GO" id="GO:0005840">
    <property type="term" value="C:ribosome"/>
    <property type="evidence" value="ECO:0007669"/>
    <property type="project" value="UniProtKB-KW"/>
</dbReference>
<dbReference type="GO" id="GO:0003735">
    <property type="term" value="F:structural constituent of ribosome"/>
    <property type="evidence" value="ECO:0007669"/>
    <property type="project" value="InterPro"/>
</dbReference>
<dbReference type="GO" id="GO:0006412">
    <property type="term" value="P:translation"/>
    <property type="evidence" value="ECO:0007669"/>
    <property type="project" value="UniProtKB-UniRule"/>
</dbReference>
<dbReference type="FunFam" id="1.10.287.3980:FF:000001">
    <property type="entry name" value="Mitochondrial ribosomal protein L34"/>
    <property type="match status" value="1"/>
</dbReference>
<dbReference type="Gene3D" id="1.10.287.3980">
    <property type="match status" value="1"/>
</dbReference>
<dbReference type="HAMAP" id="MF_00391">
    <property type="entry name" value="Ribosomal_bL34"/>
    <property type="match status" value="1"/>
</dbReference>
<dbReference type="InterPro" id="IPR000271">
    <property type="entry name" value="Ribosomal_bL34"/>
</dbReference>
<dbReference type="InterPro" id="IPR020939">
    <property type="entry name" value="Ribosomal_bL34_CS"/>
</dbReference>
<dbReference type="NCBIfam" id="TIGR01030">
    <property type="entry name" value="rpmH_bact"/>
    <property type="match status" value="1"/>
</dbReference>
<dbReference type="PANTHER" id="PTHR14503:SF4">
    <property type="entry name" value="LARGE RIBOSOMAL SUBUNIT PROTEIN BL34M"/>
    <property type="match status" value="1"/>
</dbReference>
<dbReference type="PANTHER" id="PTHR14503">
    <property type="entry name" value="MITOCHONDRIAL RIBOSOMAL PROTEIN 34 FAMILY MEMBER"/>
    <property type="match status" value="1"/>
</dbReference>
<dbReference type="Pfam" id="PF00468">
    <property type="entry name" value="Ribosomal_L34"/>
    <property type="match status" value="1"/>
</dbReference>
<dbReference type="PROSITE" id="PS00784">
    <property type="entry name" value="RIBOSOMAL_L34"/>
    <property type="match status" value="1"/>
</dbReference>
<accession>A1T0M6</accession>
<keyword id="KW-1185">Reference proteome</keyword>
<keyword id="KW-0687">Ribonucleoprotein</keyword>
<keyword id="KW-0689">Ribosomal protein</keyword>
<sequence length="44" mass="5115">MKRTFQPSNIKRKRSHGFRTRMATKNGRNVLARRRAKGRSSLSA</sequence>
<evidence type="ECO:0000255" key="1">
    <source>
        <dbReference type="HAMAP-Rule" id="MF_00391"/>
    </source>
</evidence>
<evidence type="ECO:0000256" key="2">
    <source>
        <dbReference type="SAM" id="MobiDB-lite"/>
    </source>
</evidence>
<evidence type="ECO:0000305" key="3"/>
<feature type="chain" id="PRO_1000013416" description="Large ribosomal subunit protein bL34">
    <location>
        <begin position="1"/>
        <end position="44"/>
    </location>
</feature>
<feature type="region of interest" description="Disordered" evidence="2">
    <location>
        <begin position="1"/>
        <end position="44"/>
    </location>
</feature>
<feature type="compositionally biased region" description="Basic residues" evidence="2">
    <location>
        <begin position="10"/>
        <end position="19"/>
    </location>
</feature>
<comment type="similarity">
    <text evidence="1">Belongs to the bacterial ribosomal protein bL34 family.</text>
</comment>
<protein>
    <recommendedName>
        <fullName evidence="1">Large ribosomal subunit protein bL34</fullName>
    </recommendedName>
    <alternativeName>
        <fullName evidence="3">50S ribosomal protein L34</fullName>
    </alternativeName>
</protein>
<organism>
    <name type="scientific">Psychromonas ingrahamii (strain DSM 17664 / CCUG 51855 / 37)</name>
    <dbReference type="NCBI Taxonomy" id="357804"/>
    <lineage>
        <taxon>Bacteria</taxon>
        <taxon>Pseudomonadati</taxon>
        <taxon>Pseudomonadota</taxon>
        <taxon>Gammaproteobacteria</taxon>
        <taxon>Alteromonadales</taxon>
        <taxon>Psychromonadaceae</taxon>
        <taxon>Psychromonas</taxon>
    </lineage>
</organism>
<reference key="1">
    <citation type="journal article" date="2008" name="BMC Genomics">
        <title>Genomics of an extreme psychrophile, Psychromonas ingrahamii.</title>
        <authorList>
            <person name="Riley M."/>
            <person name="Staley J.T."/>
            <person name="Danchin A."/>
            <person name="Wang T.Z."/>
            <person name="Brettin T.S."/>
            <person name="Hauser L.J."/>
            <person name="Land M.L."/>
            <person name="Thompson L.S."/>
        </authorList>
    </citation>
    <scope>NUCLEOTIDE SEQUENCE [LARGE SCALE GENOMIC DNA]</scope>
    <source>
        <strain>DSM 17664 / CCUG 51855 / 37</strain>
    </source>
</reference>
<proteinExistence type="inferred from homology"/>